<organism>
    <name type="scientific">Propionibacterium freudenreichii subsp. freudenreichii</name>
    <dbReference type="NCBI Taxonomy" id="66712"/>
    <lineage>
        <taxon>Bacteria</taxon>
        <taxon>Bacillati</taxon>
        <taxon>Actinomycetota</taxon>
        <taxon>Actinomycetes</taxon>
        <taxon>Propionibacteriales</taxon>
        <taxon>Propionibacteriaceae</taxon>
        <taxon>Propionibacterium</taxon>
    </lineage>
</organism>
<accession>Q6E3K9</accession>
<gene>
    <name evidence="3" type="primary">pcfA</name>
</gene>
<comment type="function">
    <text evidence="1">Bacteriocin with specific antibacterial activity against strains of P.freudenreichii. No antibacterial activity was detected against P.acidipropionici, P.jensenii and P.thoenii.</text>
</comment>
<comment type="subcellular location">
    <subcellularLocation>
        <location>Secreted</location>
    </subcellularLocation>
</comment>
<comment type="mass spectrometry" mass="4397.3" method="MALDI" evidence="1"/>
<reference evidence="2 3" key="1">
    <citation type="journal article" date="2004" name="Appl. Environ. Microbiol.">
        <title>Molecular and genetic characterization of propionicin F, a bacteriocin from Propionibacterium freudenreichii.</title>
        <authorList>
            <person name="Brede D.A."/>
            <person name="Faye T."/>
            <person name="Johnsborg O."/>
            <person name="Oedegaard I."/>
            <person name="Nes I.F."/>
            <person name="Holo H."/>
        </authorList>
    </citation>
    <scope>NUCLEOTIDE SEQUENCE [GENOMIC DNA]</scope>
    <scope>PROTEIN SEQUENCE OF 102-124</scope>
    <scope>FUNCTION</scope>
    <scope>MASS SPECTROMETRY</scope>
    <source>
        <strain evidence="3">LMGT 2946</strain>
    </source>
</reference>
<dbReference type="EMBL" id="AY587566">
    <property type="protein sequence ID" value="AAT47515.1"/>
    <property type="molecule type" value="Genomic_DNA"/>
</dbReference>
<dbReference type="SMR" id="Q6E3K9"/>
<dbReference type="TCDB" id="9.B.86.1.1">
    <property type="family name" value="the propionicin (propionicin) family"/>
</dbReference>
<dbReference type="GO" id="GO:0005576">
    <property type="term" value="C:extracellular region"/>
    <property type="evidence" value="ECO:0000314"/>
    <property type="project" value="UniProtKB"/>
</dbReference>
<dbReference type="GO" id="GO:0050830">
    <property type="term" value="P:defense response to Gram-positive bacterium"/>
    <property type="evidence" value="ECO:0000314"/>
    <property type="project" value="UniProtKB"/>
</dbReference>
<dbReference type="GO" id="GO:0031640">
    <property type="term" value="P:killing of cells of another organism"/>
    <property type="evidence" value="ECO:0007669"/>
    <property type="project" value="UniProtKB-KW"/>
</dbReference>
<proteinExistence type="evidence at protein level"/>
<keyword id="KW-0044">Antibiotic</keyword>
<keyword id="KW-0929">Antimicrobial</keyword>
<keyword id="KW-0078">Bacteriocin</keyword>
<keyword id="KW-0903">Direct protein sequencing</keyword>
<keyword id="KW-0964">Secreted</keyword>
<name>PRONF_PROFF</name>
<sequence length="255" mass="28310">MNTKAVNLKSENTTKLVSYLTENQLDEFIRRIRIDGALVEEVSQNAKQALDNTGLNGWINTDCDEGLLSDFISKIASARWIPLAESIRPAVTDRDKYRVSCWFYQGMNIAIYANIGGVANIIGYTEAAVATLLGAVVAVAPVVPGTPTPPKDKSSQYKEVPLAVRLSETYHEEGVRGLFDELNYSESRMISTLRRASTDGVLINSWNDGQDTILLKKYNFQDLQLTVRSRIVGNQTIIEECKITDGRKTLSDETV</sequence>
<evidence type="ECO:0000269" key="1">
    <source>
    </source>
</evidence>
<evidence type="ECO:0000305" key="2"/>
<evidence type="ECO:0000312" key="3">
    <source>
        <dbReference type="EMBL" id="AAT47515.1"/>
    </source>
</evidence>
<feature type="propeptide" id="PRO_0000229753" evidence="1">
    <location>
        <begin position="1"/>
        <end position="101"/>
    </location>
</feature>
<feature type="peptide" id="PRO_0000229754" description="Propionicin-F">
    <location>
        <begin position="102"/>
        <end position="144"/>
    </location>
</feature>
<feature type="propeptide" id="PRO_0000229755" evidence="1">
    <location>
        <begin position="145"/>
        <end position="255"/>
    </location>
</feature>
<protein>
    <recommendedName>
        <fullName>Propionicin-F</fullName>
    </recommendedName>
</protein>